<gene>
    <name evidence="1" type="primary">mepK</name>
    <name type="synonym">ycbK</name>
    <name type="ordered locus">Z1273</name>
    <name type="ordered locus">ECs1009</name>
</gene>
<dbReference type="EC" id="3.4.-.-" evidence="1"/>
<dbReference type="EMBL" id="AE005174">
    <property type="protein sequence ID" value="AAG55411.1"/>
    <property type="molecule type" value="Genomic_DNA"/>
</dbReference>
<dbReference type="EMBL" id="BA000007">
    <property type="protein sequence ID" value="BAB34432.1"/>
    <property type="molecule type" value="Genomic_DNA"/>
</dbReference>
<dbReference type="PIR" id="A90755">
    <property type="entry name" value="A90755"/>
</dbReference>
<dbReference type="RefSeq" id="NP_309036.1">
    <property type="nucleotide sequence ID" value="NC_002695.1"/>
</dbReference>
<dbReference type="RefSeq" id="WP_001295932.1">
    <property type="nucleotide sequence ID" value="NZ_VOAI01000006.1"/>
</dbReference>
<dbReference type="STRING" id="155864.Z1273"/>
<dbReference type="GeneID" id="917754"/>
<dbReference type="KEGG" id="ece:Z1273"/>
<dbReference type="KEGG" id="ecs:ECs_1009"/>
<dbReference type="PATRIC" id="fig|386585.9.peg.1129"/>
<dbReference type="eggNOG" id="COG3108">
    <property type="taxonomic scope" value="Bacteria"/>
</dbReference>
<dbReference type="HOGENOM" id="CLU_080400_1_2_6"/>
<dbReference type="OMA" id="KSYHMKG"/>
<dbReference type="UniPathway" id="UPA00963"/>
<dbReference type="Proteomes" id="UP000000558">
    <property type="component" value="Chromosome"/>
</dbReference>
<dbReference type="Proteomes" id="UP000002519">
    <property type="component" value="Chromosome"/>
</dbReference>
<dbReference type="CDD" id="cd14844">
    <property type="entry name" value="Zn-DD-carboxypeptidase_like"/>
    <property type="match status" value="1"/>
</dbReference>
<dbReference type="Gene3D" id="3.30.1380.10">
    <property type="match status" value="1"/>
</dbReference>
<dbReference type="InterPro" id="IPR010275">
    <property type="entry name" value="DUF882"/>
</dbReference>
<dbReference type="InterPro" id="IPR009045">
    <property type="entry name" value="Hedgehog_sig/DD-Pept_Zn-bd_sf"/>
</dbReference>
<dbReference type="InterPro" id="IPR006311">
    <property type="entry name" value="TAT_signal"/>
</dbReference>
<dbReference type="PANTHER" id="PTHR37425">
    <property type="match status" value="1"/>
</dbReference>
<dbReference type="PANTHER" id="PTHR37425:SF1">
    <property type="entry name" value="OUTER MEMBRANE PROTEIN"/>
    <property type="match status" value="1"/>
</dbReference>
<dbReference type="Pfam" id="PF05951">
    <property type="entry name" value="Peptidase_M15_2"/>
    <property type="match status" value="1"/>
</dbReference>
<dbReference type="SUPFAM" id="SSF55166">
    <property type="entry name" value="Hedgehog/DD-peptidase"/>
    <property type="match status" value="1"/>
</dbReference>
<dbReference type="PROSITE" id="PS51318">
    <property type="entry name" value="TAT"/>
    <property type="match status" value="1"/>
</dbReference>
<evidence type="ECO:0000250" key="1">
    <source>
        <dbReference type="UniProtKB" id="P0AB06"/>
    </source>
</evidence>
<evidence type="ECO:0000250" key="2">
    <source>
        <dbReference type="UniProtKB" id="Q06241"/>
    </source>
</evidence>
<evidence type="ECO:0000255" key="3">
    <source>
        <dbReference type="PROSITE-ProRule" id="PRU00648"/>
    </source>
</evidence>
<evidence type="ECO:0000305" key="4"/>
<protein>
    <recommendedName>
        <fullName evidence="1">Peptidoglycan L,D-endopeptidase MepK</fullName>
        <ecNumber evidence="1">3.4.-.-</ecNumber>
    </recommendedName>
    <alternativeName>
        <fullName evidence="1">Murein endopeptidase K</fullName>
    </alternativeName>
</protein>
<keyword id="KW-0961">Cell wall biogenesis/degradation</keyword>
<keyword id="KW-0378">Hydrolase</keyword>
<keyword id="KW-0479">Metal-binding</keyword>
<keyword id="KW-0482">Metalloprotease</keyword>
<keyword id="KW-0645">Protease</keyword>
<keyword id="KW-1185">Reference proteome</keyword>
<keyword id="KW-0732">Signal</keyword>
<keyword id="KW-0862">Zinc</keyword>
<accession>P0AB08</accession>
<accession>P75848</accession>
<comment type="function">
    <text evidence="1">L,D-endopeptidase that cleaves meso-diaminopimelic acid (mDAP)-mDAP cross-links in peptidoglycan. It works in conjunction with other elongation-specific D,D-endopeptidases to make space for efficient incorporation of nascent peptidoglycan strands into the sacculus and thus enable cell wall expansion.</text>
</comment>
<comment type="cofactor">
    <cofactor evidence="2">
        <name>Zn(2+)</name>
        <dbReference type="ChEBI" id="CHEBI:29105"/>
    </cofactor>
    <text evidence="2">Binds 1 zinc ion per subunit.</text>
</comment>
<comment type="pathway">
    <text evidence="1">Cell wall biogenesis; cell wall polysaccharide biosynthesis.</text>
</comment>
<comment type="PTM">
    <text evidence="3">Predicted to be exported by the Tat system. The position of the signal peptide cleavage has not been experimentally proven.</text>
</comment>
<comment type="similarity">
    <text evidence="4">Belongs to the peptidase M15 family.</text>
</comment>
<organism>
    <name type="scientific">Escherichia coli O157:H7</name>
    <dbReference type="NCBI Taxonomy" id="83334"/>
    <lineage>
        <taxon>Bacteria</taxon>
        <taxon>Pseudomonadati</taxon>
        <taxon>Pseudomonadota</taxon>
        <taxon>Gammaproteobacteria</taxon>
        <taxon>Enterobacterales</taxon>
        <taxon>Enterobacteriaceae</taxon>
        <taxon>Escherichia</taxon>
    </lineage>
</organism>
<reference key="1">
    <citation type="journal article" date="2001" name="Nature">
        <title>Genome sequence of enterohaemorrhagic Escherichia coli O157:H7.</title>
        <authorList>
            <person name="Perna N.T."/>
            <person name="Plunkett G. III"/>
            <person name="Burland V."/>
            <person name="Mau B."/>
            <person name="Glasner J.D."/>
            <person name="Rose D.J."/>
            <person name="Mayhew G.F."/>
            <person name="Evans P.S."/>
            <person name="Gregor J."/>
            <person name="Kirkpatrick H.A."/>
            <person name="Posfai G."/>
            <person name="Hackett J."/>
            <person name="Klink S."/>
            <person name="Boutin A."/>
            <person name="Shao Y."/>
            <person name="Miller L."/>
            <person name="Grotbeck E.J."/>
            <person name="Davis N.W."/>
            <person name="Lim A."/>
            <person name="Dimalanta E.T."/>
            <person name="Potamousis K."/>
            <person name="Apodaca J."/>
            <person name="Anantharaman T.S."/>
            <person name="Lin J."/>
            <person name="Yen G."/>
            <person name="Schwartz D.C."/>
            <person name="Welch R.A."/>
            <person name="Blattner F.R."/>
        </authorList>
    </citation>
    <scope>NUCLEOTIDE SEQUENCE [LARGE SCALE GENOMIC DNA]</scope>
    <source>
        <strain>O157:H7 / EDL933 / ATCC 700927 / EHEC</strain>
    </source>
</reference>
<reference key="2">
    <citation type="journal article" date="2001" name="DNA Res.">
        <title>Complete genome sequence of enterohemorrhagic Escherichia coli O157:H7 and genomic comparison with a laboratory strain K-12.</title>
        <authorList>
            <person name="Hayashi T."/>
            <person name="Makino K."/>
            <person name="Ohnishi M."/>
            <person name="Kurokawa K."/>
            <person name="Ishii K."/>
            <person name="Yokoyama K."/>
            <person name="Han C.-G."/>
            <person name="Ohtsubo E."/>
            <person name="Nakayama K."/>
            <person name="Murata T."/>
            <person name="Tanaka M."/>
            <person name="Tobe T."/>
            <person name="Iida T."/>
            <person name="Takami H."/>
            <person name="Honda T."/>
            <person name="Sasakawa C."/>
            <person name="Ogasawara N."/>
            <person name="Yasunaga T."/>
            <person name="Kuhara S."/>
            <person name="Shiba T."/>
            <person name="Hattori M."/>
            <person name="Shinagawa H."/>
        </authorList>
    </citation>
    <scope>NUCLEOTIDE SEQUENCE [LARGE SCALE GENOMIC DNA]</scope>
    <source>
        <strain>O157:H7 / Sakai / RIMD 0509952 / EHEC</strain>
    </source>
</reference>
<sequence>MDKFDANRRKLLALGGVALGAAILPTPAFATLSTPRPRILTLNNLHTGESIKAEFFDGRGYIQEELAKLNHFFRDYRANKIKSIDPGLFDQLYRLQGLLGTRKPVQLISGYRSIDTNNELRARSRGVAKKSYHTKGQAMDFHIEGIALSNIRKAALSMRAGGVGYYPRSNFVHIDTGPARHW</sequence>
<name>MEPK_ECO57</name>
<feature type="signal peptide" description="Tat-type signal" evidence="3">
    <location>
        <begin position="1"/>
        <end position="30"/>
    </location>
</feature>
<feature type="chain" id="PRO_0000168774" description="Peptidoglycan L,D-endopeptidase MepK">
    <location>
        <begin position="31"/>
        <end position="182"/>
    </location>
</feature>
<feature type="binding site" evidence="2">
    <location>
        <position position="133"/>
    </location>
    <ligand>
        <name>Zn(2+)</name>
        <dbReference type="ChEBI" id="CHEBI:29105"/>
        <note>catalytic</note>
    </ligand>
</feature>
<feature type="binding site" evidence="2">
    <location>
        <position position="140"/>
    </location>
    <ligand>
        <name>Zn(2+)</name>
        <dbReference type="ChEBI" id="CHEBI:29105"/>
        <note>catalytic</note>
    </ligand>
</feature>
<feature type="binding site" evidence="2">
    <location>
        <position position="173"/>
    </location>
    <ligand>
        <name>Zn(2+)</name>
        <dbReference type="ChEBI" id="CHEBI:29105"/>
        <note>catalytic</note>
    </ligand>
</feature>
<proteinExistence type="inferred from homology"/>